<reference key="1">
    <citation type="journal article" date="2002" name="Nature">
        <title>The genome sequence and structure of rice chromosome 1.</title>
        <authorList>
            <person name="Sasaki T."/>
            <person name="Matsumoto T."/>
            <person name="Yamamoto K."/>
            <person name="Sakata K."/>
            <person name="Baba T."/>
            <person name="Katayose Y."/>
            <person name="Wu J."/>
            <person name="Niimura Y."/>
            <person name="Cheng Z."/>
            <person name="Nagamura Y."/>
            <person name="Antonio B.A."/>
            <person name="Kanamori H."/>
            <person name="Hosokawa S."/>
            <person name="Masukawa M."/>
            <person name="Arikawa K."/>
            <person name="Chiden Y."/>
            <person name="Hayashi M."/>
            <person name="Okamoto M."/>
            <person name="Ando T."/>
            <person name="Aoki H."/>
            <person name="Arita K."/>
            <person name="Hamada M."/>
            <person name="Harada C."/>
            <person name="Hijishita S."/>
            <person name="Honda M."/>
            <person name="Ichikawa Y."/>
            <person name="Idonuma A."/>
            <person name="Iijima M."/>
            <person name="Ikeda M."/>
            <person name="Ikeno M."/>
            <person name="Ito S."/>
            <person name="Ito T."/>
            <person name="Ito Y."/>
            <person name="Ito Y."/>
            <person name="Iwabuchi A."/>
            <person name="Kamiya K."/>
            <person name="Karasawa W."/>
            <person name="Katagiri S."/>
            <person name="Kikuta A."/>
            <person name="Kobayashi N."/>
            <person name="Kono I."/>
            <person name="Machita K."/>
            <person name="Maehara T."/>
            <person name="Mizuno H."/>
            <person name="Mizubayashi T."/>
            <person name="Mukai Y."/>
            <person name="Nagasaki H."/>
            <person name="Nakashima M."/>
            <person name="Nakama Y."/>
            <person name="Nakamichi Y."/>
            <person name="Nakamura M."/>
            <person name="Namiki N."/>
            <person name="Negishi M."/>
            <person name="Ohta I."/>
            <person name="Ono N."/>
            <person name="Saji S."/>
            <person name="Sakai K."/>
            <person name="Shibata M."/>
            <person name="Shimokawa T."/>
            <person name="Shomura A."/>
            <person name="Song J."/>
            <person name="Takazaki Y."/>
            <person name="Terasawa K."/>
            <person name="Tsuji K."/>
            <person name="Waki K."/>
            <person name="Yamagata H."/>
            <person name="Yamane H."/>
            <person name="Yoshiki S."/>
            <person name="Yoshihara R."/>
            <person name="Yukawa K."/>
            <person name="Zhong H."/>
            <person name="Iwama H."/>
            <person name="Endo T."/>
            <person name="Ito H."/>
            <person name="Hahn J.H."/>
            <person name="Kim H.-I."/>
            <person name="Eun M.-Y."/>
            <person name="Yano M."/>
            <person name="Jiang J."/>
            <person name="Gojobori T."/>
        </authorList>
    </citation>
    <scope>NUCLEOTIDE SEQUENCE [LARGE SCALE GENOMIC DNA]</scope>
    <source>
        <strain>cv. Nipponbare</strain>
    </source>
</reference>
<reference key="2">
    <citation type="journal article" date="2005" name="Nature">
        <title>The map-based sequence of the rice genome.</title>
        <authorList>
            <consortium name="International rice genome sequencing project (IRGSP)"/>
        </authorList>
    </citation>
    <scope>NUCLEOTIDE SEQUENCE [LARGE SCALE GENOMIC DNA]</scope>
    <source>
        <strain>cv. Nipponbare</strain>
    </source>
</reference>
<reference key="3">
    <citation type="journal article" date="2008" name="Nucleic Acids Res.">
        <title>The rice annotation project database (RAP-DB): 2008 update.</title>
        <authorList>
            <consortium name="The rice annotation project (RAP)"/>
        </authorList>
    </citation>
    <scope>GENOME REANNOTATION</scope>
    <source>
        <strain>cv. Nipponbare</strain>
    </source>
</reference>
<reference key="4">
    <citation type="journal article" date="2013" name="Rice">
        <title>Improvement of the Oryza sativa Nipponbare reference genome using next generation sequence and optical map data.</title>
        <authorList>
            <person name="Kawahara Y."/>
            <person name="de la Bastide M."/>
            <person name="Hamilton J.P."/>
            <person name="Kanamori H."/>
            <person name="McCombie W.R."/>
            <person name="Ouyang S."/>
            <person name="Schwartz D.C."/>
            <person name="Tanaka T."/>
            <person name="Wu J."/>
            <person name="Zhou S."/>
            <person name="Childs K.L."/>
            <person name="Davidson R.M."/>
            <person name="Lin H."/>
            <person name="Quesada-Ocampo L."/>
            <person name="Vaillancourt B."/>
            <person name="Sakai H."/>
            <person name="Lee S.S."/>
            <person name="Kim J."/>
            <person name="Numa H."/>
            <person name="Itoh T."/>
            <person name="Buell C.R."/>
            <person name="Matsumoto T."/>
        </authorList>
    </citation>
    <scope>GENOME REANNOTATION</scope>
    <source>
        <strain>cv. Nipponbare</strain>
    </source>
</reference>
<reference key="5">
    <citation type="journal article" date="2003" name="Science">
        <title>Collection, mapping, and annotation of over 28,000 cDNA clones from japonica rice.</title>
        <authorList>
            <consortium name="The rice full-length cDNA consortium"/>
        </authorList>
    </citation>
    <scope>NUCLEOTIDE SEQUENCE [LARGE SCALE MRNA]</scope>
    <source>
        <strain>cv. Nipponbare</strain>
    </source>
</reference>
<accession>Q5N8F2</accession>
<accession>A0A0P0V751</accession>
<keyword id="KW-0256">Endoplasmic reticulum</keyword>
<keyword id="KW-0378">Hydrolase</keyword>
<keyword id="KW-1185">Reference proteome</keyword>
<keyword id="KW-0732">Signal</keyword>
<organism>
    <name type="scientific">Oryza sativa subsp. japonica</name>
    <name type="common">Rice</name>
    <dbReference type="NCBI Taxonomy" id="39947"/>
    <lineage>
        <taxon>Eukaryota</taxon>
        <taxon>Viridiplantae</taxon>
        <taxon>Streptophyta</taxon>
        <taxon>Embryophyta</taxon>
        <taxon>Tracheophyta</taxon>
        <taxon>Spermatophyta</taxon>
        <taxon>Magnoliopsida</taxon>
        <taxon>Liliopsida</taxon>
        <taxon>Poales</taxon>
        <taxon>Poaceae</taxon>
        <taxon>BOP clade</taxon>
        <taxon>Oryzoideae</taxon>
        <taxon>Oryzeae</taxon>
        <taxon>Oryzinae</taxon>
        <taxon>Oryza</taxon>
        <taxon>Oryza sativa</taxon>
    </lineage>
</organism>
<sequence length="456" mass="48203">MARARASAMGAAPPPHLRSHDLVVVVAVAAAALCLACRGASAGGGGGVDVLDRARRPEFAAWMAGVRWAIHERPELAFEEIETSRLVRAELDAMGVAYRHPVAGTGVVATVGTGRPPFVALRADMDALPMQEEVQWEHKSKVAMKMHACGHDAHTTMLLGAARILQERRHELQGTVVLLFQPGEEVGTGARRMVEAGAVDNVEAIFGFHVSVELPTGVVGSRPGPLLAGCGFFEAVITGKGGHAAHPHASVDPILAASTVVLALQGLVSREADPLEAQVVTVTRFLAGDALNVIPESITIGGTFRVFSNEGFLRLKRRIEEVIVAQSAVYRCAAAVDFHAGGRPLLPPTINSAALHAHFQAVAAETLGASAAVLGAMEPCMGSEDFAVFSEAVPASHFYFVGVRNEAEGLVHLAHSPHFRVDDAALPYGAALHASLAMRYLDERRREGGSHPHEEL</sequence>
<name>ILL2_ORYSJ</name>
<dbReference type="EC" id="3.5.1.-"/>
<dbReference type="EMBL" id="AP003273">
    <property type="protein sequence ID" value="BAD81927.1"/>
    <property type="molecule type" value="Genomic_DNA"/>
</dbReference>
<dbReference type="EMBL" id="AP003381">
    <property type="protein sequence ID" value="BAD82256.1"/>
    <property type="molecule type" value="Genomic_DNA"/>
</dbReference>
<dbReference type="EMBL" id="AP008207">
    <property type="protein sequence ID" value="BAF05934.1"/>
    <property type="molecule type" value="Genomic_DNA"/>
</dbReference>
<dbReference type="EMBL" id="AP014957">
    <property type="protein sequence ID" value="BAS73948.1"/>
    <property type="molecule type" value="Genomic_DNA"/>
</dbReference>
<dbReference type="EMBL" id="AK105646">
    <property type="status" value="NOT_ANNOTATED_CDS"/>
    <property type="molecule type" value="mRNA"/>
</dbReference>
<dbReference type="RefSeq" id="XP_015624333.1">
    <property type="nucleotide sequence ID" value="XM_015768847.1"/>
</dbReference>
<dbReference type="SMR" id="Q5N8F2"/>
<dbReference type="FunCoup" id="Q5N8F2">
    <property type="interactions" value="201"/>
</dbReference>
<dbReference type="STRING" id="39947.Q5N8F2"/>
<dbReference type="MEROPS" id="M20.014"/>
<dbReference type="PaxDb" id="39947-Q5N8F2"/>
<dbReference type="EnsemblPlants" id="Os01t0706900-01">
    <property type="protein sequence ID" value="Os01t0706900-01"/>
    <property type="gene ID" value="Os01g0706900"/>
</dbReference>
<dbReference type="Gramene" id="Os01t0706900-01">
    <property type="protein sequence ID" value="Os01t0706900-01"/>
    <property type="gene ID" value="Os01g0706900"/>
</dbReference>
<dbReference type="KEGG" id="dosa:Os01g0706900"/>
<dbReference type="eggNOG" id="ENOG502QQEM">
    <property type="taxonomic scope" value="Eukaryota"/>
</dbReference>
<dbReference type="HOGENOM" id="CLU_023257_0_0_1"/>
<dbReference type="InParanoid" id="Q5N8F2"/>
<dbReference type="OMA" id="PECQTMG"/>
<dbReference type="OrthoDB" id="6119954at2759"/>
<dbReference type="Proteomes" id="UP000000763">
    <property type="component" value="Chromosome 1"/>
</dbReference>
<dbReference type="Proteomes" id="UP000059680">
    <property type="component" value="Chromosome 1"/>
</dbReference>
<dbReference type="GO" id="GO:0005788">
    <property type="term" value="C:endoplasmic reticulum lumen"/>
    <property type="evidence" value="ECO:0007669"/>
    <property type="project" value="UniProtKB-SubCell"/>
</dbReference>
<dbReference type="GO" id="GO:0010179">
    <property type="term" value="F:IAA-Ala conjugate hydrolase activity"/>
    <property type="evidence" value="ECO:0000318"/>
    <property type="project" value="GO_Central"/>
</dbReference>
<dbReference type="GO" id="GO:0009850">
    <property type="term" value="P:auxin metabolic process"/>
    <property type="evidence" value="ECO:0000318"/>
    <property type="project" value="GO_Central"/>
</dbReference>
<dbReference type="CDD" id="cd08017">
    <property type="entry name" value="M20_IAA_Hyd"/>
    <property type="match status" value="1"/>
</dbReference>
<dbReference type="FunFam" id="3.30.70.360:FF:000001">
    <property type="entry name" value="N-acetyldiaminopimelate deacetylase"/>
    <property type="match status" value="1"/>
</dbReference>
<dbReference type="Gene3D" id="3.30.70.360">
    <property type="match status" value="1"/>
</dbReference>
<dbReference type="Gene3D" id="3.40.630.10">
    <property type="entry name" value="Zn peptidases"/>
    <property type="match status" value="1"/>
</dbReference>
<dbReference type="InterPro" id="IPR017439">
    <property type="entry name" value="Amidohydrolase"/>
</dbReference>
<dbReference type="InterPro" id="IPR036264">
    <property type="entry name" value="Bact_exopeptidase_dim_dom"/>
</dbReference>
<dbReference type="InterPro" id="IPR044757">
    <property type="entry name" value="ILR1-like_Hyd"/>
</dbReference>
<dbReference type="InterPro" id="IPR002933">
    <property type="entry name" value="Peptidase_M20"/>
</dbReference>
<dbReference type="InterPro" id="IPR011650">
    <property type="entry name" value="Peptidase_M20_dimer"/>
</dbReference>
<dbReference type="NCBIfam" id="TIGR01891">
    <property type="entry name" value="amidohydrolases"/>
    <property type="match status" value="1"/>
</dbReference>
<dbReference type="PANTHER" id="PTHR11014:SF100">
    <property type="entry name" value="IAA-AMINO ACID HYDROLASE ILR1-LIKE 2"/>
    <property type="match status" value="1"/>
</dbReference>
<dbReference type="PANTHER" id="PTHR11014">
    <property type="entry name" value="PEPTIDASE M20 FAMILY MEMBER"/>
    <property type="match status" value="1"/>
</dbReference>
<dbReference type="Pfam" id="PF07687">
    <property type="entry name" value="M20_dimer"/>
    <property type="match status" value="1"/>
</dbReference>
<dbReference type="Pfam" id="PF01546">
    <property type="entry name" value="Peptidase_M20"/>
    <property type="match status" value="1"/>
</dbReference>
<dbReference type="PIRSF" id="PIRSF005962">
    <property type="entry name" value="Pept_M20D_amidohydro"/>
    <property type="match status" value="1"/>
</dbReference>
<dbReference type="SUPFAM" id="SSF55031">
    <property type="entry name" value="Bacterial exopeptidase dimerisation domain"/>
    <property type="match status" value="1"/>
</dbReference>
<dbReference type="SUPFAM" id="SSF53187">
    <property type="entry name" value="Zn-dependent exopeptidases"/>
    <property type="match status" value="1"/>
</dbReference>
<dbReference type="PROSITE" id="PS00014">
    <property type="entry name" value="ER_TARGET"/>
    <property type="match status" value="1"/>
</dbReference>
<proteinExistence type="evidence at transcript level"/>
<evidence type="ECO:0000250" key="1"/>
<evidence type="ECO:0000255" key="2"/>
<evidence type="ECO:0000255" key="3">
    <source>
        <dbReference type="PROSITE-ProRule" id="PRU10138"/>
    </source>
</evidence>
<evidence type="ECO:0000305" key="4"/>
<gene>
    <name type="primary">ILL2</name>
    <name type="ordered locus">Os01g0706900</name>
    <name type="ordered locus">LOC_Os01g51060</name>
    <name type="ORF">P0510F09.6</name>
    <name type="ORF">P0692C11.28</name>
</gene>
<protein>
    <recommendedName>
        <fullName>IAA-amino acid hydrolase ILR1-like 2</fullName>
        <ecNumber>3.5.1.-</ecNumber>
    </recommendedName>
</protein>
<feature type="signal peptide" evidence="2">
    <location>
        <begin position="1"/>
        <end position="42"/>
    </location>
</feature>
<feature type="chain" id="PRO_0000351638" description="IAA-amino acid hydrolase ILR1-like 2">
    <location>
        <begin position="43"/>
        <end position="456"/>
    </location>
</feature>
<feature type="short sequence motif" description="Prevents secretion from ER" evidence="3">
    <location>
        <begin position="453"/>
        <end position="456"/>
    </location>
</feature>
<feature type="sequence conflict" description="In Ref. 5; AK105646." evidence="4" ref="5">
    <original>R</original>
    <variation>W</variation>
    <location>
        <position position="318"/>
    </location>
</feature>
<comment type="function">
    <text evidence="1">Hydrolyzes certain amino acid conjugates of the plant growth regulator indole-3-acetic acid (IAA).</text>
</comment>
<comment type="subcellular location">
    <subcellularLocation>
        <location evidence="3">Endoplasmic reticulum lumen</location>
    </subcellularLocation>
</comment>
<comment type="similarity">
    <text evidence="4">Belongs to the peptidase M20 family.</text>
</comment>